<comment type="function">
    <text evidence="1">Synthesizes selenophosphate from selenide and ATP.</text>
</comment>
<comment type="catalytic activity">
    <reaction evidence="1">
        <text>hydrogenselenide + ATP + H2O = selenophosphate + AMP + phosphate + 2 H(+)</text>
        <dbReference type="Rhea" id="RHEA:18737"/>
        <dbReference type="ChEBI" id="CHEBI:15377"/>
        <dbReference type="ChEBI" id="CHEBI:15378"/>
        <dbReference type="ChEBI" id="CHEBI:16144"/>
        <dbReference type="ChEBI" id="CHEBI:29317"/>
        <dbReference type="ChEBI" id="CHEBI:30616"/>
        <dbReference type="ChEBI" id="CHEBI:43474"/>
        <dbReference type="ChEBI" id="CHEBI:456215"/>
        <dbReference type="EC" id="2.7.9.3"/>
    </reaction>
</comment>
<comment type="cofactor">
    <cofactor evidence="1">
        <name>Mg(2+)</name>
        <dbReference type="ChEBI" id="CHEBI:18420"/>
    </cofactor>
    <text evidence="1">Binds 1 Mg(2+) ion per monomer.</text>
</comment>
<comment type="subunit">
    <text evidence="1">Homodimer.</text>
</comment>
<comment type="similarity">
    <text evidence="1">Belongs to the selenophosphate synthase 1 family. Class I subfamily.</text>
</comment>
<protein>
    <recommendedName>
        <fullName evidence="1">Selenide, water dikinase</fullName>
        <ecNumber evidence="1">2.7.9.3</ecNumber>
    </recommendedName>
    <alternativeName>
        <fullName evidence="1">Selenium donor protein</fullName>
    </alternativeName>
    <alternativeName>
        <fullName evidence="1">Selenophosphate synthase</fullName>
    </alternativeName>
</protein>
<accession>Q0HNW1</accession>
<evidence type="ECO:0000255" key="1">
    <source>
        <dbReference type="HAMAP-Rule" id="MF_00625"/>
    </source>
</evidence>
<organism>
    <name type="scientific">Shewanella sp. (strain MR-4)</name>
    <dbReference type="NCBI Taxonomy" id="60480"/>
    <lineage>
        <taxon>Bacteria</taxon>
        <taxon>Pseudomonadati</taxon>
        <taxon>Pseudomonadota</taxon>
        <taxon>Gammaproteobacteria</taxon>
        <taxon>Alteromonadales</taxon>
        <taxon>Shewanellaceae</taxon>
        <taxon>Shewanella</taxon>
    </lineage>
</organism>
<name>SELD_SHESM</name>
<reference key="1">
    <citation type="submission" date="2006-08" db="EMBL/GenBank/DDBJ databases">
        <title>Complete sequence of Shewanella sp. MR-4.</title>
        <authorList>
            <consortium name="US DOE Joint Genome Institute"/>
            <person name="Copeland A."/>
            <person name="Lucas S."/>
            <person name="Lapidus A."/>
            <person name="Barry K."/>
            <person name="Detter J.C."/>
            <person name="Glavina del Rio T."/>
            <person name="Hammon N."/>
            <person name="Israni S."/>
            <person name="Dalin E."/>
            <person name="Tice H."/>
            <person name="Pitluck S."/>
            <person name="Kiss H."/>
            <person name="Brettin T."/>
            <person name="Bruce D."/>
            <person name="Han C."/>
            <person name="Tapia R."/>
            <person name="Gilna P."/>
            <person name="Schmutz J."/>
            <person name="Larimer F."/>
            <person name="Land M."/>
            <person name="Hauser L."/>
            <person name="Kyrpides N."/>
            <person name="Mikhailova N."/>
            <person name="Nealson K."/>
            <person name="Konstantinidis K."/>
            <person name="Klappenbach J."/>
            <person name="Tiedje J."/>
            <person name="Richardson P."/>
        </authorList>
    </citation>
    <scope>NUCLEOTIDE SEQUENCE [LARGE SCALE GENOMIC DNA]</scope>
    <source>
        <strain>MR-4</strain>
    </source>
</reference>
<sequence>MSNSAVSSANSIKLTEYSHGAGCGCKISPKVLTTILASQLPVFTDPNLLVGNQSRDDAAVYKLNDEIGIISTTDFFMPIVDDPFTFGRIAATNAISDIYAMGGTPMMAIAILGWPVNKLPAEIAQQVVDGGRQACMEAGIMLAGGHSIDAPEPIFGLAVTGQIALTDLKQNDTAKAGDRLYLTKPIGIGILTTAQKQKKLKDEDSQIAVNAMCQLNSIGAKIAKIKGVNALTDVTGFGLAGHLLEVCQGAKLTAKLDLDSVPLLPRALDYLAQGCIPGGTHRNYDSYGEHLPALTDHQKAILCDPQTSGGLLVAVSSEAEAELVALLNAHQIEPICIGSLETPTSTANVVLC</sequence>
<proteinExistence type="inferred from homology"/>
<dbReference type="EC" id="2.7.9.3" evidence="1"/>
<dbReference type="EMBL" id="CP000446">
    <property type="protein sequence ID" value="ABI37256.1"/>
    <property type="molecule type" value="Genomic_DNA"/>
</dbReference>
<dbReference type="RefSeq" id="WP_011621008.1">
    <property type="nucleotide sequence ID" value="NC_008321.1"/>
</dbReference>
<dbReference type="SMR" id="Q0HNW1"/>
<dbReference type="KEGG" id="she:Shewmr4_0175"/>
<dbReference type="HOGENOM" id="CLU_032859_0_1_6"/>
<dbReference type="GO" id="GO:0005737">
    <property type="term" value="C:cytoplasm"/>
    <property type="evidence" value="ECO:0007669"/>
    <property type="project" value="TreeGrafter"/>
</dbReference>
<dbReference type="GO" id="GO:0005524">
    <property type="term" value="F:ATP binding"/>
    <property type="evidence" value="ECO:0007669"/>
    <property type="project" value="UniProtKB-UniRule"/>
</dbReference>
<dbReference type="GO" id="GO:0000287">
    <property type="term" value="F:magnesium ion binding"/>
    <property type="evidence" value="ECO:0007669"/>
    <property type="project" value="UniProtKB-UniRule"/>
</dbReference>
<dbReference type="GO" id="GO:0004756">
    <property type="term" value="F:selenide, water dikinase activity"/>
    <property type="evidence" value="ECO:0007669"/>
    <property type="project" value="UniProtKB-UniRule"/>
</dbReference>
<dbReference type="GO" id="GO:0016260">
    <property type="term" value="P:selenocysteine biosynthetic process"/>
    <property type="evidence" value="ECO:0007669"/>
    <property type="project" value="InterPro"/>
</dbReference>
<dbReference type="CDD" id="cd02195">
    <property type="entry name" value="SelD"/>
    <property type="match status" value="1"/>
</dbReference>
<dbReference type="FunFam" id="3.30.1330.10:FF:000003">
    <property type="entry name" value="Selenide, water dikinase"/>
    <property type="match status" value="1"/>
</dbReference>
<dbReference type="FunFam" id="3.90.650.10:FF:000004">
    <property type="entry name" value="Selenide, water dikinase"/>
    <property type="match status" value="1"/>
</dbReference>
<dbReference type="Gene3D" id="3.90.650.10">
    <property type="entry name" value="PurM-like C-terminal domain"/>
    <property type="match status" value="1"/>
</dbReference>
<dbReference type="Gene3D" id="3.30.1330.10">
    <property type="entry name" value="PurM-like, N-terminal domain"/>
    <property type="match status" value="1"/>
</dbReference>
<dbReference type="HAMAP" id="MF_00625">
    <property type="entry name" value="SelD"/>
    <property type="match status" value="1"/>
</dbReference>
<dbReference type="InterPro" id="IPR010918">
    <property type="entry name" value="PurM-like_C_dom"/>
</dbReference>
<dbReference type="InterPro" id="IPR036676">
    <property type="entry name" value="PurM-like_C_sf"/>
</dbReference>
<dbReference type="InterPro" id="IPR016188">
    <property type="entry name" value="PurM-like_N"/>
</dbReference>
<dbReference type="InterPro" id="IPR036921">
    <property type="entry name" value="PurM-like_N_sf"/>
</dbReference>
<dbReference type="InterPro" id="IPR023061">
    <property type="entry name" value="SelD_I"/>
</dbReference>
<dbReference type="InterPro" id="IPR004536">
    <property type="entry name" value="SPS/SelD"/>
</dbReference>
<dbReference type="NCBIfam" id="NF002098">
    <property type="entry name" value="PRK00943.1"/>
    <property type="match status" value="1"/>
</dbReference>
<dbReference type="NCBIfam" id="TIGR00476">
    <property type="entry name" value="selD"/>
    <property type="match status" value="1"/>
</dbReference>
<dbReference type="PANTHER" id="PTHR10256:SF0">
    <property type="entry name" value="INACTIVE SELENIDE, WATER DIKINASE-LIKE PROTEIN-RELATED"/>
    <property type="match status" value="1"/>
</dbReference>
<dbReference type="PANTHER" id="PTHR10256">
    <property type="entry name" value="SELENIDE, WATER DIKINASE"/>
    <property type="match status" value="1"/>
</dbReference>
<dbReference type="Pfam" id="PF00586">
    <property type="entry name" value="AIRS"/>
    <property type="match status" value="1"/>
</dbReference>
<dbReference type="Pfam" id="PF02769">
    <property type="entry name" value="AIRS_C"/>
    <property type="match status" value="1"/>
</dbReference>
<dbReference type="PIRSF" id="PIRSF036407">
    <property type="entry name" value="Selenphspht_syn"/>
    <property type="match status" value="1"/>
</dbReference>
<dbReference type="SUPFAM" id="SSF56042">
    <property type="entry name" value="PurM C-terminal domain-like"/>
    <property type="match status" value="1"/>
</dbReference>
<dbReference type="SUPFAM" id="SSF55326">
    <property type="entry name" value="PurM N-terminal domain-like"/>
    <property type="match status" value="1"/>
</dbReference>
<gene>
    <name evidence="1" type="primary">selD</name>
    <name type="ordered locus">Shewmr4_0175</name>
</gene>
<feature type="chain" id="PRO_1000051605" description="Selenide, water dikinase">
    <location>
        <begin position="1"/>
        <end position="352"/>
    </location>
</feature>
<feature type="active site" evidence="1">
    <location>
        <position position="23"/>
    </location>
</feature>
<feature type="binding site" description="in other chain" evidence="1">
    <location>
        <position position="26"/>
    </location>
    <ligand>
        <name>ATP</name>
        <dbReference type="ChEBI" id="CHEBI:30616"/>
        <note>ligand shared between dimeric partners</note>
    </ligand>
</feature>
<feature type="binding site" description="in other chain" evidence="1">
    <location>
        <begin position="54"/>
        <end position="56"/>
    </location>
    <ligand>
        <name>ATP</name>
        <dbReference type="ChEBI" id="CHEBI:30616"/>
        <note>ligand shared between dimeric partners</note>
    </ligand>
</feature>
<feature type="binding site" evidence="1">
    <location>
        <position position="57"/>
    </location>
    <ligand>
        <name>Mg(2+)</name>
        <dbReference type="ChEBI" id="CHEBI:18420"/>
    </ligand>
</feature>
<feature type="binding site" description="in other chain" evidence="1">
    <location>
        <position position="74"/>
    </location>
    <ligand>
        <name>ATP</name>
        <dbReference type="ChEBI" id="CHEBI:30616"/>
        <note>ligand shared between dimeric partners</note>
    </ligand>
</feature>
<feature type="binding site" description="in other chain" evidence="1">
    <location>
        <position position="97"/>
    </location>
    <ligand>
        <name>ATP</name>
        <dbReference type="ChEBI" id="CHEBI:30616"/>
        <note>ligand shared between dimeric partners</note>
    </ligand>
</feature>
<feature type="binding site" evidence="1">
    <location>
        <position position="97"/>
    </location>
    <ligand>
        <name>Mg(2+)</name>
        <dbReference type="ChEBI" id="CHEBI:18420"/>
    </ligand>
</feature>
<feature type="binding site" evidence="1">
    <location>
        <begin position="145"/>
        <end position="147"/>
    </location>
    <ligand>
        <name>ATP</name>
        <dbReference type="ChEBI" id="CHEBI:30616"/>
        <note>ligand shared between dimeric partners</note>
    </ligand>
</feature>
<feature type="binding site" evidence="1">
    <location>
        <position position="233"/>
    </location>
    <ligand>
        <name>Mg(2+)</name>
        <dbReference type="ChEBI" id="CHEBI:18420"/>
    </ligand>
</feature>
<feature type="site" description="Important for catalytic activity" evidence="1">
    <location>
        <position position="26"/>
    </location>
</feature>
<keyword id="KW-0067">ATP-binding</keyword>
<keyword id="KW-0418">Kinase</keyword>
<keyword id="KW-0460">Magnesium</keyword>
<keyword id="KW-0479">Metal-binding</keyword>
<keyword id="KW-0547">Nucleotide-binding</keyword>
<keyword id="KW-0711">Selenium</keyword>
<keyword id="KW-0808">Transferase</keyword>